<name>CPG3_CAEBR</name>
<gene>
    <name type="primary">cpg-3</name>
    <name type="ORF">CBG21920</name>
</gene>
<organism>
    <name type="scientific">Caenorhabditis briggsae</name>
    <dbReference type="NCBI Taxonomy" id="6238"/>
    <lineage>
        <taxon>Eukaryota</taxon>
        <taxon>Metazoa</taxon>
        <taxon>Ecdysozoa</taxon>
        <taxon>Nematoda</taxon>
        <taxon>Chromadorea</taxon>
        <taxon>Rhabditida</taxon>
        <taxon>Rhabditina</taxon>
        <taxon>Rhabditomorpha</taxon>
        <taxon>Rhabditoidea</taxon>
        <taxon>Rhabditidae</taxon>
        <taxon>Peloderinae</taxon>
        <taxon>Caenorhabditis</taxon>
    </lineage>
</organism>
<sequence>MRSSFIFALLLIGAALAHPATDPIRSKRAVEVVEDDFSGEASGEASGEASGEFSGEGSGEGSGELSPEVEVTPLTISQLETLNNYAQQVQAEAQKLIHQANFVITEMTALAANAQNLGIMSSIVSTNSQIVLDSARLSLNETETETGNTTTVAPPTTCSTSAVCYSDEGCGSGKCIGALAGTCNCNSCVYGWPCQEDSACGGFIGACNTITATCDCFNAYAKHNMTLTDAFTNFCNVAKCNGGEDNVENCHGLPCNYGFCVC</sequence>
<accession>A8Y181</accession>
<evidence type="ECO:0000255" key="1"/>
<evidence type="ECO:0000256" key="2">
    <source>
        <dbReference type="SAM" id="MobiDB-lite"/>
    </source>
</evidence>
<evidence type="ECO:0000305" key="3"/>
<dbReference type="EMBL" id="HE600952">
    <property type="protein sequence ID" value="CAP38642.3"/>
    <property type="molecule type" value="Genomic_DNA"/>
</dbReference>
<dbReference type="FunCoup" id="A8Y181">
    <property type="interactions" value="1384"/>
</dbReference>
<dbReference type="STRING" id="6238.A8Y181"/>
<dbReference type="GlyCosmos" id="A8Y181">
    <property type="glycosylation" value="3 sites, No reported glycans"/>
</dbReference>
<dbReference type="EnsemblMetazoa" id="CBG21920.1">
    <property type="protein sequence ID" value="CBG21920.1"/>
    <property type="gene ID" value="WBGene00040589"/>
</dbReference>
<dbReference type="KEGG" id="cbr:CBG_21920"/>
<dbReference type="CTD" id="8572898"/>
<dbReference type="WormBase" id="CBG21920">
    <property type="protein sequence ID" value="CBP11993"/>
    <property type="gene ID" value="WBGene00040589"/>
    <property type="gene designation" value="Cbr-cpg-3"/>
</dbReference>
<dbReference type="eggNOG" id="ENOG502RT8N">
    <property type="taxonomic scope" value="Eukaryota"/>
</dbReference>
<dbReference type="HOGENOM" id="CLU_1009114_0_0_1"/>
<dbReference type="InParanoid" id="A8Y181"/>
<dbReference type="OMA" id="FVITEMT"/>
<dbReference type="Proteomes" id="UP000008549">
    <property type="component" value="Unassembled WGS sequence"/>
</dbReference>
<dbReference type="InterPro" id="IPR039260">
    <property type="entry name" value="Cpg-3"/>
</dbReference>
<dbReference type="PANTHER" id="PTHR37973">
    <property type="entry name" value="CHONDROITIN PROTEOGLYCAN 3"/>
    <property type="match status" value="1"/>
</dbReference>
<dbReference type="PANTHER" id="PTHR37973:SF3">
    <property type="entry name" value="CHONDROITIN PROTEOGLYCAN 3-RELATED"/>
    <property type="match status" value="1"/>
</dbReference>
<reference evidence="3" key="1">
    <citation type="journal article" date="2003" name="PLoS Biol.">
        <title>The genome sequence of Caenorhabditis briggsae: a platform for comparative genomics.</title>
        <authorList>
            <person name="Stein L.D."/>
            <person name="Bao Z."/>
            <person name="Blasiar D."/>
            <person name="Blumenthal T."/>
            <person name="Brent M.R."/>
            <person name="Chen N."/>
            <person name="Chinwalla A."/>
            <person name="Clarke L."/>
            <person name="Clee C."/>
            <person name="Coghlan A."/>
            <person name="Coulson A."/>
            <person name="D'Eustachio P."/>
            <person name="Fitch D.H.A."/>
            <person name="Fulton L.A."/>
            <person name="Fulton R.E."/>
            <person name="Griffiths-Jones S."/>
            <person name="Harris T.W."/>
            <person name="Hillier L.W."/>
            <person name="Kamath R."/>
            <person name="Kuwabara P.E."/>
            <person name="Mardis E.R."/>
            <person name="Marra M.A."/>
            <person name="Miner T.L."/>
            <person name="Minx P."/>
            <person name="Mullikin J.C."/>
            <person name="Plumb R.W."/>
            <person name="Rogers J."/>
            <person name="Schein J.E."/>
            <person name="Sohrmann M."/>
            <person name="Spieth J."/>
            <person name="Stajich J.E."/>
            <person name="Wei C."/>
            <person name="Willey D."/>
            <person name="Wilson R.K."/>
            <person name="Durbin R.M."/>
            <person name="Waterston R.H."/>
        </authorList>
    </citation>
    <scope>NUCLEOTIDE SEQUENCE [LARGE SCALE GENOMIC DNA]</scope>
    <source>
        <strain>AF16</strain>
    </source>
</reference>
<proteinExistence type="inferred from homology"/>
<feature type="signal peptide" evidence="1">
    <location>
        <begin position="1"/>
        <end position="17"/>
    </location>
</feature>
<feature type="chain" id="PRO_0000320221" description="Chondroitin proteoglycan 3">
    <location>
        <begin position="18"/>
        <end position="262"/>
    </location>
</feature>
<feature type="region of interest" description="Disordered" evidence="2">
    <location>
        <begin position="37"/>
        <end position="68"/>
    </location>
</feature>
<feature type="compositionally biased region" description="Low complexity" evidence="2">
    <location>
        <begin position="39"/>
        <end position="53"/>
    </location>
</feature>
<feature type="glycosylation site" description="N-linked (GlcNAc...) asparagine" evidence="1">
    <location>
        <position position="140"/>
    </location>
</feature>
<feature type="glycosylation site" description="N-linked (GlcNAc...) asparagine" evidence="1">
    <location>
        <position position="148"/>
    </location>
</feature>
<feature type="glycosylation site" description="N-linked (GlcNAc...) asparagine" evidence="1">
    <location>
        <position position="224"/>
    </location>
</feature>
<keyword id="KW-0325">Glycoprotein</keyword>
<keyword id="KW-0654">Proteoglycan</keyword>
<keyword id="KW-1185">Reference proteome</keyword>
<keyword id="KW-0732">Signal</keyword>
<protein>
    <recommendedName>
        <fullName>Chondroitin proteoglycan 3</fullName>
    </recommendedName>
</protein>